<keyword id="KW-0325">Glycoprotein</keyword>
<keyword id="KW-0349">Heme</keyword>
<keyword id="KW-0408">Iron</keyword>
<keyword id="KW-0472">Membrane</keyword>
<keyword id="KW-0479">Metal-binding</keyword>
<keyword id="KW-0503">Monooxygenase</keyword>
<keyword id="KW-0560">Oxidoreductase</keyword>
<keyword id="KW-0812">Transmembrane</keyword>
<keyword id="KW-1133">Transmembrane helix</keyword>
<keyword id="KW-0843">Virulence</keyword>
<organism>
    <name type="scientific">Phaeosphaeria nodorum (strain SN15 / ATCC MYA-4574 / FGSC 10173)</name>
    <name type="common">Glume blotch fungus</name>
    <name type="synonym">Parastagonospora nodorum</name>
    <dbReference type="NCBI Taxonomy" id="321614"/>
    <lineage>
        <taxon>Eukaryota</taxon>
        <taxon>Fungi</taxon>
        <taxon>Dikarya</taxon>
        <taxon>Ascomycota</taxon>
        <taxon>Pezizomycotina</taxon>
        <taxon>Dothideomycetes</taxon>
        <taxon>Pleosporomycetidae</taxon>
        <taxon>Pleosporales</taxon>
        <taxon>Pleosporineae</taxon>
        <taxon>Phaeosphaeriaceae</taxon>
        <taxon>Parastagonospora</taxon>
    </lineage>
</organism>
<comment type="function">
    <text evidence="4 7">Cytochrome P450 monooxygenase; part of the gene cluster that mediates the biosynthesis of the mycotoxins phomacins, leucine-derived cytochalasans with potent actin polymerization-inhibitory activities and monocot-specific antigerminative activities (PubMed:31815421). The first step in the pathway is catalyzed by the hybrid PKS-NRPS phmA, assisted by the enoyl reductase phmE, that are responsible for fusion of the leucine precursor and the polyketide backbone to produce a 2-pyrrolidone intermediate (PubMed:31815421). The polyketide synthase module (PKS) of phmA is responsible for the synthesis of the polyketide backbone and the downstream nonribosomal peptide synthetase (NRPS) amidates the carboxyl end of the polyketide with the leucine precursor (PubMed:31815421). Because phmA lacks a designated enoylreductase (ER) domain, the required activity is provided the enoyl reductase phmE (PubMed:31815421). Reduction by the hydrolyase phmG, followed by dehydration and intra-molecular Diels-Alder cyclization by the Diels-Alderase phmD then yield the required isoindolone-fused macrocycle (Probable). A number of oxidative steps catalyzed by the tailoring cytochrome P450 monooxygenase phmB, the FAD-linked oxidoreductase phmC and the short-chain dehydrogenase/reductase phmF, are further required to afford the final products, phomacin D and phomacin E (PubMed:31815421).</text>
</comment>
<comment type="cofactor">
    <cofactor evidence="1">
        <name>heme</name>
        <dbReference type="ChEBI" id="CHEBI:30413"/>
    </cofactor>
</comment>
<comment type="pathway">
    <text evidence="7">Mycotoxin biosynthesis.</text>
</comment>
<comment type="subcellular location">
    <subcellularLocation>
        <location evidence="2">Membrane</location>
        <topology evidence="2">Single-pass membrane protein</topology>
    </subcellularLocation>
</comment>
<comment type="similarity">
    <text evidence="6">Belongs to the cytochrome P450 family.</text>
</comment>
<dbReference type="EC" id="1.-.-.-" evidence="7"/>
<dbReference type="EMBL" id="CH445325">
    <property type="protein sequence ID" value="EAT91801.1"/>
    <property type="molecule type" value="Genomic_DNA"/>
</dbReference>
<dbReference type="RefSeq" id="XP_001790996.1">
    <property type="nucleotide sequence ID" value="XM_001790944.1"/>
</dbReference>
<dbReference type="SMR" id="Q0V6Q8"/>
<dbReference type="STRING" id="321614.Q0V6Q8"/>
<dbReference type="GlyCosmos" id="Q0V6Q8">
    <property type="glycosylation" value="5 sites, No reported glycans"/>
</dbReference>
<dbReference type="EnsemblFungi" id="SNOT_00306">
    <property type="protein sequence ID" value="SNOT_00306"/>
    <property type="gene ID" value="SNOG_00306"/>
</dbReference>
<dbReference type="GeneID" id="5968090"/>
<dbReference type="KEGG" id="pno:SNOG_00306"/>
<dbReference type="VEuPathDB" id="FungiDB:JI435_003060"/>
<dbReference type="eggNOG" id="KOG0156">
    <property type="taxonomic scope" value="Eukaryota"/>
</dbReference>
<dbReference type="HOGENOM" id="CLU_022195_0_2_1"/>
<dbReference type="InParanoid" id="Q0V6Q8"/>
<dbReference type="OMA" id="KMTPLAN"/>
<dbReference type="OrthoDB" id="1844152at2759"/>
<dbReference type="Proteomes" id="UP000001055">
    <property type="component" value="Unassembled WGS sequence"/>
</dbReference>
<dbReference type="GO" id="GO:0016020">
    <property type="term" value="C:membrane"/>
    <property type="evidence" value="ECO:0007669"/>
    <property type="project" value="UniProtKB-SubCell"/>
</dbReference>
<dbReference type="GO" id="GO:0020037">
    <property type="term" value="F:heme binding"/>
    <property type="evidence" value="ECO:0007669"/>
    <property type="project" value="InterPro"/>
</dbReference>
<dbReference type="GO" id="GO:0005506">
    <property type="term" value="F:iron ion binding"/>
    <property type="evidence" value="ECO:0007669"/>
    <property type="project" value="InterPro"/>
</dbReference>
<dbReference type="GO" id="GO:0004497">
    <property type="term" value="F:monooxygenase activity"/>
    <property type="evidence" value="ECO:0007669"/>
    <property type="project" value="UniProtKB-KW"/>
</dbReference>
<dbReference type="GO" id="GO:0016705">
    <property type="term" value="F:oxidoreductase activity, acting on paired donors, with incorporation or reduction of molecular oxygen"/>
    <property type="evidence" value="ECO:0007669"/>
    <property type="project" value="InterPro"/>
</dbReference>
<dbReference type="GO" id="GO:0019748">
    <property type="term" value="P:secondary metabolic process"/>
    <property type="evidence" value="ECO:0007669"/>
    <property type="project" value="UniProtKB-ARBA"/>
</dbReference>
<dbReference type="CDD" id="cd11041">
    <property type="entry name" value="CYP503A1-like"/>
    <property type="match status" value="1"/>
</dbReference>
<dbReference type="Gene3D" id="1.10.630.10">
    <property type="entry name" value="Cytochrome P450"/>
    <property type="match status" value="1"/>
</dbReference>
<dbReference type="InterPro" id="IPR001128">
    <property type="entry name" value="Cyt_P450"/>
</dbReference>
<dbReference type="InterPro" id="IPR002401">
    <property type="entry name" value="Cyt_P450_E_grp-I"/>
</dbReference>
<dbReference type="InterPro" id="IPR036396">
    <property type="entry name" value="Cyt_P450_sf"/>
</dbReference>
<dbReference type="PANTHER" id="PTHR46206">
    <property type="entry name" value="CYTOCHROME P450"/>
    <property type="match status" value="1"/>
</dbReference>
<dbReference type="PANTHER" id="PTHR46206:SF6">
    <property type="entry name" value="CYTOCHROME P450 MONOOXYGENASE AN1598-RELATED"/>
    <property type="match status" value="1"/>
</dbReference>
<dbReference type="Pfam" id="PF00067">
    <property type="entry name" value="p450"/>
    <property type="match status" value="1"/>
</dbReference>
<dbReference type="PRINTS" id="PR00463">
    <property type="entry name" value="EP450I"/>
</dbReference>
<dbReference type="SUPFAM" id="SSF48264">
    <property type="entry name" value="Cytochrome P450"/>
    <property type="match status" value="1"/>
</dbReference>
<evidence type="ECO:0000250" key="1">
    <source>
        <dbReference type="UniProtKB" id="P04798"/>
    </source>
</evidence>
<evidence type="ECO:0000255" key="2"/>
<evidence type="ECO:0000255" key="3">
    <source>
        <dbReference type="PROSITE-ProRule" id="PRU00498"/>
    </source>
</evidence>
<evidence type="ECO:0000269" key="4">
    <source>
    </source>
</evidence>
<evidence type="ECO:0000303" key="5">
    <source>
    </source>
</evidence>
<evidence type="ECO:0000305" key="6"/>
<evidence type="ECO:0000305" key="7">
    <source>
    </source>
</evidence>
<protein>
    <recommendedName>
        <fullName evidence="5">Cytochrome P450 monooxygenase phmB</fullName>
        <ecNumber evidence="7">1.-.-.-</ecNumber>
    </recommendedName>
    <alternativeName>
        <fullName evidence="5">Phomacin biosynthesis cluster protein B</fullName>
    </alternativeName>
</protein>
<accession>Q0V6Q8</accession>
<proteinExistence type="inferred from homology"/>
<reference key="1">
    <citation type="journal article" date="2007" name="Plant Cell">
        <title>Dothideomycete-plant interactions illuminated by genome sequencing and EST analysis of the wheat pathogen Stagonospora nodorum.</title>
        <authorList>
            <person name="Hane J.K."/>
            <person name="Lowe R.G.T."/>
            <person name="Solomon P.S."/>
            <person name="Tan K.-C."/>
            <person name="Schoch C.L."/>
            <person name="Spatafora J.W."/>
            <person name="Crous P.W."/>
            <person name="Kodira C.D."/>
            <person name="Birren B.W."/>
            <person name="Galagan J.E."/>
            <person name="Torriani S.F.F."/>
            <person name="McDonald B.A."/>
            <person name="Oliver R.P."/>
        </authorList>
    </citation>
    <scope>NUCLEOTIDE SEQUENCE [LARGE SCALE GENOMIC DNA]</scope>
    <source>
        <strain>SN15 / ATCC MYA-4574 / FGSC 10173</strain>
    </source>
</reference>
<reference key="2">
    <citation type="journal article" date="2020" name="ACS Chem. Biol.">
        <title>Genomics-driven discovery of phytotoxic cytochalasans involved in the virulence of the wheat pathogen Parastagonospora nodorum.</title>
        <authorList>
            <person name="Li H."/>
            <person name="Wei H."/>
            <person name="Hu J."/>
            <person name="Lacey E."/>
            <person name="Sobolev A.N."/>
            <person name="Stubbs K.A."/>
            <person name="Solomon P.S."/>
            <person name="Chooi Y.H."/>
        </authorList>
    </citation>
    <scope>FUNCTION</scope>
    <scope>PATHWAY</scope>
</reference>
<feature type="chain" id="PRO_0000449433" description="Cytochrome P450 monooxygenase phmB">
    <location>
        <begin position="1"/>
        <end position="598"/>
    </location>
</feature>
<feature type="transmembrane region" description="Helical" evidence="2">
    <location>
        <begin position="107"/>
        <end position="127"/>
    </location>
</feature>
<feature type="binding site" description="axial binding residue" evidence="1">
    <location>
        <position position="542"/>
    </location>
    <ligand>
        <name>heme</name>
        <dbReference type="ChEBI" id="CHEBI:30413"/>
    </ligand>
    <ligandPart>
        <name>Fe</name>
        <dbReference type="ChEBI" id="CHEBI:18248"/>
    </ligandPart>
</feature>
<feature type="glycosylation site" description="N-linked (GlcNAc...) asparagine" evidence="3">
    <location>
        <position position="171"/>
    </location>
</feature>
<feature type="glycosylation site" description="N-linked (GlcNAc...) asparagine" evidence="3">
    <location>
        <position position="428"/>
    </location>
</feature>
<feature type="glycosylation site" description="N-linked (GlcNAc...) asparagine" evidence="3">
    <location>
        <position position="494"/>
    </location>
</feature>
<feature type="glycosylation site" description="N-linked (GlcNAc...) asparagine" evidence="3">
    <location>
        <position position="549"/>
    </location>
</feature>
<feature type="glycosylation site" description="N-linked (GlcNAc...) asparagine" evidence="3">
    <location>
        <position position="581"/>
    </location>
</feature>
<gene>
    <name evidence="5" type="primary">phmB</name>
    <name type="ORF">SNOG_00306</name>
</gene>
<name>PHMB_PHANO</name>
<sequence>MAFPGVRRGLGELIGLRKSDAWYSTEDPRFGLTCRITASTRKLASCTSPWQYADIIQFIASTTITTIMLESLIEQWQIMRQAFAPMRLSRWQLVKLLAAQIHRDNPVAAKIAALLFVAGLFWAVSVLTRPKRLDKKLGLPLIGGSRTLKKDFATVIERGRQMYPDQPFIVNSSGKPFVVYPPSNFDEIKRLSEEEASAQDFFYDATHGYWTSVGTETPALWKTIGIDLARAGAPVVSTKQKDARTAFDRYVGYCPDEKSFNVFDVMMKVVALTNGASFVGREVAGGRWHELVAQLPMTVYFAVIFLTWTPRLFRPFLEPLFFLPHFKVQRDMRRILEPIIKQDLDEWSKTDDKKEQLKVKEGQRLPYHKWLISRYGPGEATPRQLATDQIVTAFESTISTALTIYYILFQLASRPELQDELRQEIADNTTDGQLPSTSLTELRKMDSVMRESFRVNPFALFSLYRITRKPLQLSTGPKLPAGTIFCVDVHHINNSSALFPAPTRYDPHRFLNKREQPGAEHRHQFVSTGPMDPNFGDGTQACPGRFWANNTIKVCLVHVLTRYRLKLKEGHTRPQPVCMPNGSWVPDLKAEVIFQSLD</sequence>